<sequence length="231" mass="25480">MKRAVVVFSGGQDSTTCLVQALQQYDEVHCVTFDYGQRHRAEIDVARELALKLGARAHKVLDVTLLNELAVSSLTRDSIPVPDYEPEADGIPNTFVPGRNILFLTLAAIYAYQVKAEAVITGVCETDFSGYPDCRDEFVKVLNHAVSLGMAKDIRFETPLMWIDKAETWALADYYGKLDLVRNETLTCYNGIKGDGCGHCAACNLRANGLNHYLADKPTVMAAMKQKTGLK</sequence>
<dbReference type="EC" id="6.3.4.20" evidence="1"/>
<dbReference type="EMBL" id="AE005174">
    <property type="protein sequence ID" value="AAG54794.1"/>
    <property type="molecule type" value="Genomic_DNA"/>
</dbReference>
<dbReference type="EMBL" id="BA000007">
    <property type="protein sequence ID" value="BAB33921.1"/>
    <property type="molecule type" value="Genomic_DNA"/>
</dbReference>
<dbReference type="PIR" id="B90691">
    <property type="entry name" value="B90691"/>
</dbReference>
<dbReference type="PIR" id="F85541">
    <property type="entry name" value="F85541"/>
</dbReference>
<dbReference type="RefSeq" id="NP_308525.1">
    <property type="nucleotide sequence ID" value="NC_002695.1"/>
</dbReference>
<dbReference type="RefSeq" id="WP_000817243.1">
    <property type="nucleotide sequence ID" value="NZ_VOAI01000005.1"/>
</dbReference>
<dbReference type="SMR" id="Q8XE52"/>
<dbReference type="STRING" id="155864.Z0551"/>
<dbReference type="GeneID" id="914600"/>
<dbReference type="KEGG" id="ece:Z0551"/>
<dbReference type="KEGG" id="ecs:ECs_0498"/>
<dbReference type="PATRIC" id="fig|386585.9.peg.601"/>
<dbReference type="eggNOG" id="COG0603">
    <property type="taxonomic scope" value="Bacteria"/>
</dbReference>
<dbReference type="HOGENOM" id="CLU_081854_0_0_6"/>
<dbReference type="OMA" id="VWVPNRN"/>
<dbReference type="UniPathway" id="UPA00391"/>
<dbReference type="Proteomes" id="UP000000558">
    <property type="component" value="Chromosome"/>
</dbReference>
<dbReference type="Proteomes" id="UP000002519">
    <property type="component" value="Chromosome"/>
</dbReference>
<dbReference type="GO" id="GO:0005524">
    <property type="term" value="F:ATP binding"/>
    <property type="evidence" value="ECO:0007669"/>
    <property type="project" value="UniProtKB-UniRule"/>
</dbReference>
<dbReference type="GO" id="GO:0016879">
    <property type="term" value="F:ligase activity, forming carbon-nitrogen bonds"/>
    <property type="evidence" value="ECO:0007669"/>
    <property type="project" value="UniProtKB-UniRule"/>
</dbReference>
<dbReference type="GO" id="GO:0008270">
    <property type="term" value="F:zinc ion binding"/>
    <property type="evidence" value="ECO:0007669"/>
    <property type="project" value="UniProtKB-UniRule"/>
</dbReference>
<dbReference type="GO" id="GO:0008616">
    <property type="term" value="P:queuosine biosynthetic process"/>
    <property type="evidence" value="ECO:0007669"/>
    <property type="project" value="UniProtKB-UniRule"/>
</dbReference>
<dbReference type="CDD" id="cd01995">
    <property type="entry name" value="QueC-like"/>
    <property type="match status" value="1"/>
</dbReference>
<dbReference type="FunFam" id="3.40.50.620:FF:000017">
    <property type="entry name" value="7-cyano-7-deazaguanine synthase"/>
    <property type="match status" value="1"/>
</dbReference>
<dbReference type="Gene3D" id="3.40.50.620">
    <property type="entry name" value="HUPs"/>
    <property type="match status" value="1"/>
</dbReference>
<dbReference type="HAMAP" id="MF_01633">
    <property type="entry name" value="QueC"/>
    <property type="match status" value="1"/>
</dbReference>
<dbReference type="InterPro" id="IPR018317">
    <property type="entry name" value="QueC"/>
</dbReference>
<dbReference type="InterPro" id="IPR014729">
    <property type="entry name" value="Rossmann-like_a/b/a_fold"/>
</dbReference>
<dbReference type="NCBIfam" id="TIGR00364">
    <property type="entry name" value="7-cyano-7-deazaguanine synthase QueC"/>
    <property type="match status" value="1"/>
</dbReference>
<dbReference type="NCBIfam" id="NF008317">
    <property type="entry name" value="PRK11106.1"/>
    <property type="match status" value="1"/>
</dbReference>
<dbReference type="PANTHER" id="PTHR42914">
    <property type="entry name" value="7-CYANO-7-DEAZAGUANINE SYNTHASE"/>
    <property type="match status" value="1"/>
</dbReference>
<dbReference type="PANTHER" id="PTHR42914:SF1">
    <property type="entry name" value="7-CYANO-7-DEAZAGUANINE SYNTHASE"/>
    <property type="match status" value="1"/>
</dbReference>
<dbReference type="Pfam" id="PF06508">
    <property type="entry name" value="QueC"/>
    <property type="match status" value="1"/>
</dbReference>
<dbReference type="PIRSF" id="PIRSF006293">
    <property type="entry name" value="ExsB"/>
    <property type="match status" value="1"/>
</dbReference>
<dbReference type="SUPFAM" id="SSF52402">
    <property type="entry name" value="Adenine nucleotide alpha hydrolases-like"/>
    <property type="match status" value="1"/>
</dbReference>
<keyword id="KW-0067">ATP-binding</keyword>
<keyword id="KW-0436">Ligase</keyword>
<keyword id="KW-0479">Metal-binding</keyword>
<keyword id="KW-0547">Nucleotide-binding</keyword>
<keyword id="KW-0671">Queuosine biosynthesis</keyword>
<keyword id="KW-1185">Reference proteome</keyword>
<keyword id="KW-0862">Zinc</keyword>
<gene>
    <name evidence="1" type="primary">queC</name>
    <name type="ordered locus">Z0551</name>
    <name type="ordered locus">ECs0498</name>
</gene>
<proteinExistence type="inferred from homology"/>
<accession>Q8XE52</accession>
<accession>Q7AGZ7</accession>
<protein>
    <recommendedName>
        <fullName evidence="1">7-cyano-7-deazaguanine synthase</fullName>
        <ecNumber evidence="1">6.3.4.20</ecNumber>
    </recommendedName>
    <alternativeName>
        <fullName evidence="1">7-cyano-7-carbaguanine synthase</fullName>
    </alternativeName>
    <alternativeName>
        <fullName evidence="1">PreQ(0) synthase</fullName>
    </alternativeName>
    <alternativeName>
        <fullName evidence="1">Queuosine biosynthesis protein QueC</fullName>
    </alternativeName>
</protein>
<reference key="1">
    <citation type="journal article" date="2001" name="Nature">
        <title>Genome sequence of enterohaemorrhagic Escherichia coli O157:H7.</title>
        <authorList>
            <person name="Perna N.T."/>
            <person name="Plunkett G. III"/>
            <person name="Burland V."/>
            <person name="Mau B."/>
            <person name="Glasner J.D."/>
            <person name="Rose D.J."/>
            <person name="Mayhew G.F."/>
            <person name="Evans P.S."/>
            <person name="Gregor J."/>
            <person name="Kirkpatrick H.A."/>
            <person name="Posfai G."/>
            <person name="Hackett J."/>
            <person name="Klink S."/>
            <person name="Boutin A."/>
            <person name="Shao Y."/>
            <person name="Miller L."/>
            <person name="Grotbeck E.J."/>
            <person name="Davis N.W."/>
            <person name="Lim A."/>
            <person name="Dimalanta E.T."/>
            <person name="Potamousis K."/>
            <person name="Apodaca J."/>
            <person name="Anantharaman T.S."/>
            <person name="Lin J."/>
            <person name="Yen G."/>
            <person name="Schwartz D.C."/>
            <person name="Welch R.A."/>
            <person name="Blattner F.R."/>
        </authorList>
    </citation>
    <scope>NUCLEOTIDE SEQUENCE [LARGE SCALE GENOMIC DNA]</scope>
    <source>
        <strain>O157:H7 / EDL933 / ATCC 700927 / EHEC</strain>
    </source>
</reference>
<reference key="2">
    <citation type="journal article" date="2001" name="DNA Res.">
        <title>Complete genome sequence of enterohemorrhagic Escherichia coli O157:H7 and genomic comparison with a laboratory strain K-12.</title>
        <authorList>
            <person name="Hayashi T."/>
            <person name="Makino K."/>
            <person name="Ohnishi M."/>
            <person name="Kurokawa K."/>
            <person name="Ishii K."/>
            <person name="Yokoyama K."/>
            <person name="Han C.-G."/>
            <person name="Ohtsubo E."/>
            <person name="Nakayama K."/>
            <person name="Murata T."/>
            <person name="Tanaka M."/>
            <person name="Tobe T."/>
            <person name="Iida T."/>
            <person name="Takami H."/>
            <person name="Honda T."/>
            <person name="Sasakawa C."/>
            <person name="Ogasawara N."/>
            <person name="Yasunaga T."/>
            <person name="Kuhara S."/>
            <person name="Shiba T."/>
            <person name="Hattori M."/>
            <person name="Shinagawa H."/>
        </authorList>
    </citation>
    <scope>NUCLEOTIDE SEQUENCE [LARGE SCALE GENOMIC DNA]</scope>
    <source>
        <strain>O157:H7 / Sakai / RIMD 0509952 / EHEC</strain>
    </source>
</reference>
<comment type="function">
    <text evidence="1">Catalyzes the ATP-dependent conversion of 7-carboxy-7-deazaguanine (CDG) to 7-cyano-7-deazaguanine (preQ(0)).</text>
</comment>
<comment type="catalytic activity">
    <reaction evidence="1">
        <text>7-carboxy-7-deazaguanine + NH4(+) + ATP = 7-cyano-7-deazaguanine + ADP + phosphate + H2O + H(+)</text>
        <dbReference type="Rhea" id="RHEA:27982"/>
        <dbReference type="ChEBI" id="CHEBI:15377"/>
        <dbReference type="ChEBI" id="CHEBI:15378"/>
        <dbReference type="ChEBI" id="CHEBI:28938"/>
        <dbReference type="ChEBI" id="CHEBI:30616"/>
        <dbReference type="ChEBI" id="CHEBI:43474"/>
        <dbReference type="ChEBI" id="CHEBI:45075"/>
        <dbReference type="ChEBI" id="CHEBI:61036"/>
        <dbReference type="ChEBI" id="CHEBI:456216"/>
        <dbReference type="EC" id="6.3.4.20"/>
    </reaction>
</comment>
<comment type="cofactor">
    <cofactor evidence="1">
        <name>Zn(2+)</name>
        <dbReference type="ChEBI" id="CHEBI:29105"/>
    </cofactor>
    <text evidence="1">Binds 1 zinc ion per subunit.</text>
</comment>
<comment type="pathway">
    <text evidence="1">Purine metabolism; 7-cyano-7-deazaguanine biosynthesis.</text>
</comment>
<comment type="similarity">
    <text evidence="1">Belongs to the QueC family.</text>
</comment>
<name>QUEC_ECO57</name>
<evidence type="ECO:0000255" key="1">
    <source>
        <dbReference type="HAMAP-Rule" id="MF_01633"/>
    </source>
</evidence>
<feature type="chain" id="PRO_0000246841" description="7-cyano-7-deazaguanine synthase">
    <location>
        <begin position="1"/>
        <end position="231"/>
    </location>
</feature>
<feature type="binding site" evidence="1">
    <location>
        <begin position="8"/>
        <end position="18"/>
    </location>
    <ligand>
        <name>ATP</name>
        <dbReference type="ChEBI" id="CHEBI:30616"/>
    </ligand>
</feature>
<feature type="binding site" evidence="1">
    <location>
        <position position="188"/>
    </location>
    <ligand>
        <name>Zn(2+)</name>
        <dbReference type="ChEBI" id="CHEBI:29105"/>
    </ligand>
</feature>
<feature type="binding site" evidence="1">
    <location>
        <position position="197"/>
    </location>
    <ligand>
        <name>Zn(2+)</name>
        <dbReference type="ChEBI" id="CHEBI:29105"/>
    </ligand>
</feature>
<feature type="binding site" evidence="1">
    <location>
        <position position="200"/>
    </location>
    <ligand>
        <name>Zn(2+)</name>
        <dbReference type="ChEBI" id="CHEBI:29105"/>
    </ligand>
</feature>
<feature type="binding site" evidence="1">
    <location>
        <position position="203"/>
    </location>
    <ligand>
        <name>Zn(2+)</name>
        <dbReference type="ChEBI" id="CHEBI:29105"/>
    </ligand>
</feature>
<organism>
    <name type="scientific">Escherichia coli O157:H7</name>
    <dbReference type="NCBI Taxonomy" id="83334"/>
    <lineage>
        <taxon>Bacteria</taxon>
        <taxon>Pseudomonadati</taxon>
        <taxon>Pseudomonadota</taxon>
        <taxon>Gammaproteobacteria</taxon>
        <taxon>Enterobacterales</taxon>
        <taxon>Enterobacteriaceae</taxon>
        <taxon>Escherichia</taxon>
    </lineage>
</organism>